<feature type="chain" id="PRO_0000120414" description="Glutamate-1-semialdehyde 2,1-aminomutase">
    <location>
        <begin position="1"/>
        <end position="430"/>
    </location>
</feature>
<feature type="modified residue" description="N6-(pyridoxal phosphate)lysine" evidence="1">
    <location>
        <position position="265"/>
    </location>
</feature>
<sequence length="430" mass="46727">MELLHSINDFNEAKQVIAGGVNSPVRAFKSVKGTPPFILKGKGAYLYDVDNNHYIDFVQSWGPLIFGHADEEIEENIINALKKGTSFGAPTELETTLAKEIISCYEGLDKVRLVSSGTEATMSAIRLARAYSQKDDLIKFEGCYHGHSDSLLVKAGSGCATFGSPSSLGVPNDFSKHTLVARYNDLNSTEECFKKGNVGCVIIEPIAGNMGLVPAQKEFLLGLKALCEKYQAVLILDEVMSGFRASLSGSQEFYGVVPDLVTFGKVIGAGLPLACFGGRAEIMDLLSPIGSVYQAGTLSGNPLAVCAGLSALYKIKRDKTLYTRLDALAIRLTQGLQKSAQNYNIALETLNMGSMFGFFFNENAVHDFDDALKSDTEMFAKFHQKMLFKGVYLACSSFETGFICEPMTEEMIDLTIAKADESFDEIIKGV</sequence>
<comment type="catalytic activity">
    <reaction>
        <text>(S)-4-amino-5-oxopentanoate = 5-aminolevulinate</text>
        <dbReference type="Rhea" id="RHEA:14265"/>
        <dbReference type="ChEBI" id="CHEBI:57501"/>
        <dbReference type="ChEBI" id="CHEBI:356416"/>
        <dbReference type="EC" id="5.4.3.8"/>
    </reaction>
</comment>
<comment type="cofactor">
    <cofactor evidence="1">
        <name>pyridoxal 5'-phosphate</name>
        <dbReference type="ChEBI" id="CHEBI:597326"/>
    </cofactor>
</comment>
<comment type="pathway">
    <text>Porphyrin-containing compound metabolism; protoporphyrin-IX biosynthesis; 5-aminolevulinate from L-glutamyl-tRNA(Glu): step 2/2.</text>
</comment>
<comment type="subunit">
    <text evidence="1">Homodimer.</text>
</comment>
<comment type="subcellular location">
    <subcellularLocation>
        <location evidence="2">Cytoplasm</location>
    </subcellularLocation>
</comment>
<comment type="similarity">
    <text evidence="2">Belongs to the class-III pyridoxal-phosphate-dependent aminotransferase family. HemL subfamily.</text>
</comment>
<dbReference type="EC" id="5.4.3.8"/>
<dbReference type="EMBL" id="AE000511">
    <property type="protein sequence ID" value="AAD07374.1"/>
    <property type="molecule type" value="Genomic_DNA"/>
</dbReference>
<dbReference type="PIR" id="B64558">
    <property type="entry name" value="B64558"/>
</dbReference>
<dbReference type="RefSeq" id="NP_207104.1">
    <property type="nucleotide sequence ID" value="NC_000915.1"/>
</dbReference>
<dbReference type="RefSeq" id="WP_000421462.1">
    <property type="nucleotide sequence ID" value="NC_018939.1"/>
</dbReference>
<dbReference type="SMR" id="P56115"/>
<dbReference type="DIP" id="DIP-3347N"/>
<dbReference type="FunCoup" id="P56115">
    <property type="interactions" value="393"/>
</dbReference>
<dbReference type="IntAct" id="P56115">
    <property type="interactions" value="4"/>
</dbReference>
<dbReference type="MINT" id="P56115"/>
<dbReference type="STRING" id="85962.HP_0306"/>
<dbReference type="PaxDb" id="85962-C694_01545"/>
<dbReference type="EnsemblBacteria" id="AAD07374">
    <property type="protein sequence ID" value="AAD07374"/>
    <property type="gene ID" value="HP_0306"/>
</dbReference>
<dbReference type="KEGG" id="heo:C694_01545"/>
<dbReference type="KEGG" id="hpy:HP_0306"/>
<dbReference type="PATRIC" id="fig|85962.47.peg.326"/>
<dbReference type="eggNOG" id="COG0001">
    <property type="taxonomic scope" value="Bacteria"/>
</dbReference>
<dbReference type="InParanoid" id="P56115"/>
<dbReference type="OrthoDB" id="9801052at2"/>
<dbReference type="PhylomeDB" id="P56115"/>
<dbReference type="UniPathway" id="UPA00251">
    <property type="reaction ID" value="UER00317"/>
</dbReference>
<dbReference type="Proteomes" id="UP000000429">
    <property type="component" value="Chromosome"/>
</dbReference>
<dbReference type="GO" id="GO:0005737">
    <property type="term" value="C:cytoplasm"/>
    <property type="evidence" value="ECO:0007669"/>
    <property type="project" value="UniProtKB-SubCell"/>
</dbReference>
<dbReference type="GO" id="GO:0042286">
    <property type="term" value="F:glutamate-1-semialdehyde 2,1-aminomutase activity"/>
    <property type="evidence" value="ECO:0007669"/>
    <property type="project" value="UniProtKB-UniRule"/>
</dbReference>
<dbReference type="GO" id="GO:0030170">
    <property type="term" value="F:pyridoxal phosphate binding"/>
    <property type="evidence" value="ECO:0007669"/>
    <property type="project" value="InterPro"/>
</dbReference>
<dbReference type="GO" id="GO:0008483">
    <property type="term" value="F:transaminase activity"/>
    <property type="evidence" value="ECO:0007669"/>
    <property type="project" value="InterPro"/>
</dbReference>
<dbReference type="GO" id="GO:0006782">
    <property type="term" value="P:protoporphyrinogen IX biosynthetic process"/>
    <property type="evidence" value="ECO:0007669"/>
    <property type="project" value="UniProtKB-UniRule"/>
</dbReference>
<dbReference type="CDD" id="cd00610">
    <property type="entry name" value="OAT_like"/>
    <property type="match status" value="1"/>
</dbReference>
<dbReference type="FunFam" id="3.40.640.10:FF:000021">
    <property type="entry name" value="Glutamate-1-semialdehyde 2,1-aminomutase"/>
    <property type="match status" value="1"/>
</dbReference>
<dbReference type="Gene3D" id="3.90.1150.10">
    <property type="entry name" value="Aspartate Aminotransferase, domain 1"/>
    <property type="match status" value="1"/>
</dbReference>
<dbReference type="Gene3D" id="3.40.640.10">
    <property type="entry name" value="Type I PLP-dependent aspartate aminotransferase-like (Major domain)"/>
    <property type="match status" value="1"/>
</dbReference>
<dbReference type="HAMAP" id="MF_00375">
    <property type="entry name" value="HemL_aminotrans_3"/>
    <property type="match status" value="1"/>
</dbReference>
<dbReference type="InterPro" id="IPR004639">
    <property type="entry name" value="4pyrrol_synth_GluAld_NH2Trfase"/>
</dbReference>
<dbReference type="InterPro" id="IPR005814">
    <property type="entry name" value="Aminotrans_3"/>
</dbReference>
<dbReference type="InterPro" id="IPR049704">
    <property type="entry name" value="Aminotrans_3_PPA_site"/>
</dbReference>
<dbReference type="InterPro" id="IPR015424">
    <property type="entry name" value="PyrdxlP-dep_Trfase"/>
</dbReference>
<dbReference type="InterPro" id="IPR015421">
    <property type="entry name" value="PyrdxlP-dep_Trfase_major"/>
</dbReference>
<dbReference type="InterPro" id="IPR015422">
    <property type="entry name" value="PyrdxlP-dep_Trfase_small"/>
</dbReference>
<dbReference type="NCBIfam" id="TIGR00713">
    <property type="entry name" value="hemL"/>
    <property type="match status" value="1"/>
</dbReference>
<dbReference type="NCBIfam" id="NF000818">
    <property type="entry name" value="PRK00062.1"/>
    <property type="match status" value="1"/>
</dbReference>
<dbReference type="PANTHER" id="PTHR43713">
    <property type="entry name" value="GLUTAMATE-1-SEMIALDEHYDE 2,1-AMINOMUTASE"/>
    <property type="match status" value="1"/>
</dbReference>
<dbReference type="PANTHER" id="PTHR43713:SF3">
    <property type="entry name" value="GLUTAMATE-1-SEMIALDEHYDE 2,1-AMINOMUTASE 1, CHLOROPLASTIC-RELATED"/>
    <property type="match status" value="1"/>
</dbReference>
<dbReference type="Pfam" id="PF00202">
    <property type="entry name" value="Aminotran_3"/>
    <property type="match status" value="1"/>
</dbReference>
<dbReference type="SUPFAM" id="SSF53383">
    <property type="entry name" value="PLP-dependent transferases"/>
    <property type="match status" value="1"/>
</dbReference>
<dbReference type="PROSITE" id="PS00600">
    <property type="entry name" value="AA_TRANSFER_CLASS_3"/>
    <property type="match status" value="1"/>
</dbReference>
<accession>P56115</accession>
<name>GSA_HELPY</name>
<gene>
    <name type="primary">hemL</name>
    <name type="ordered locus">HP_0306</name>
</gene>
<keyword id="KW-0963">Cytoplasm</keyword>
<keyword id="KW-0413">Isomerase</keyword>
<keyword id="KW-0627">Porphyrin biosynthesis</keyword>
<keyword id="KW-0663">Pyridoxal phosphate</keyword>
<keyword id="KW-1185">Reference proteome</keyword>
<protein>
    <recommendedName>
        <fullName>Glutamate-1-semialdehyde 2,1-aminomutase</fullName>
        <shortName>GSA</shortName>
        <ecNumber>5.4.3.8</ecNumber>
    </recommendedName>
    <alternativeName>
        <fullName>Glutamate-1-semialdehyde aminotransferase</fullName>
        <shortName>GSA-AT</shortName>
    </alternativeName>
</protein>
<reference key="1">
    <citation type="journal article" date="1997" name="Nature">
        <title>The complete genome sequence of the gastric pathogen Helicobacter pylori.</title>
        <authorList>
            <person name="Tomb J.-F."/>
            <person name="White O."/>
            <person name="Kerlavage A.R."/>
            <person name="Clayton R.A."/>
            <person name="Sutton G.G."/>
            <person name="Fleischmann R.D."/>
            <person name="Ketchum K.A."/>
            <person name="Klenk H.-P."/>
            <person name="Gill S.R."/>
            <person name="Dougherty B.A."/>
            <person name="Nelson K.E."/>
            <person name="Quackenbush J."/>
            <person name="Zhou L."/>
            <person name="Kirkness E.F."/>
            <person name="Peterson S.N."/>
            <person name="Loftus B.J."/>
            <person name="Richardson D.L."/>
            <person name="Dodson R.J."/>
            <person name="Khalak H.G."/>
            <person name="Glodek A."/>
            <person name="McKenney K."/>
            <person name="FitzGerald L.M."/>
            <person name="Lee N."/>
            <person name="Adams M.D."/>
            <person name="Hickey E.K."/>
            <person name="Berg D.E."/>
            <person name="Gocayne J.D."/>
            <person name="Utterback T.R."/>
            <person name="Peterson J.D."/>
            <person name="Kelley J.M."/>
            <person name="Cotton M.D."/>
            <person name="Weidman J.F."/>
            <person name="Fujii C."/>
            <person name="Bowman C."/>
            <person name="Watthey L."/>
            <person name="Wallin E."/>
            <person name="Hayes W.S."/>
            <person name="Borodovsky M."/>
            <person name="Karp P.D."/>
            <person name="Smith H.O."/>
            <person name="Fraser C.M."/>
            <person name="Venter J.C."/>
        </authorList>
    </citation>
    <scope>NUCLEOTIDE SEQUENCE [LARGE SCALE GENOMIC DNA]</scope>
    <source>
        <strain>ATCC 700392 / 26695</strain>
    </source>
</reference>
<proteinExistence type="inferred from homology"/>
<organism>
    <name type="scientific">Helicobacter pylori (strain ATCC 700392 / 26695)</name>
    <name type="common">Campylobacter pylori</name>
    <dbReference type="NCBI Taxonomy" id="85962"/>
    <lineage>
        <taxon>Bacteria</taxon>
        <taxon>Pseudomonadati</taxon>
        <taxon>Campylobacterota</taxon>
        <taxon>Epsilonproteobacteria</taxon>
        <taxon>Campylobacterales</taxon>
        <taxon>Helicobacteraceae</taxon>
        <taxon>Helicobacter</taxon>
    </lineage>
</organism>
<evidence type="ECO:0000250" key="1"/>
<evidence type="ECO:0000305" key="2"/>